<comment type="catalytic activity">
    <reaction evidence="1">
        <text>alpha-D-xylose = alpha-D-xylulofuranose</text>
        <dbReference type="Rhea" id="RHEA:22816"/>
        <dbReference type="ChEBI" id="CHEBI:28518"/>
        <dbReference type="ChEBI" id="CHEBI:188998"/>
        <dbReference type="EC" id="5.3.1.5"/>
    </reaction>
</comment>
<comment type="cofactor">
    <cofactor evidence="1">
        <name>Mg(2+)</name>
        <dbReference type="ChEBI" id="CHEBI:18420"/>
    </cofactor>
    <text evidence="1">Binds 2 magnesium ions per subunit.</text>
</comment>
<comment type="subunit">
    <text evidence="1">Homotetramer.</text>
</comment>
<comment type="subcellular location">
    <subcellularLocation>
        <location evidence="1">Cytoplasm</location>
    </subcellularLocation>
</comment>
<comment type="similarity">
    <text evidence="1">Belongs to the xylose isomerase family.</text>
</comment>
<evidence type="ECO:0000255" key="1">
    <source>
        <dbReference type="HAMAP-Rule" id="MF_00455"/>
    </source>
</evidence>
<reference key="1">
    <citation type="journal article" date="2009" name="PLoS Genet.">
        <title>Organised genome dynamics in the Escherichia coli species results in highly diverse adaptive paths.</title>
        <authorList>
            <person name="Touchon M."/>
            <person name="Hoede C."/>
            <person name="Tenaillon O."/>
            <person name="Barbe V."/>
            <person name="Baeriswyl S."/>
            <person name="Bidet P."/>
            <person name="Bingen E."/>
            <person name="Bonacorsi S."/>
            <person name="Bouchier C."/>
            <person name="Bouvet O."/>
            <person name="Calteau A."/>
            <person name="Chiapello H."/>
            <person name="Clermont O."/>
            <person name="Cruveiller S."/>
            <person name="Danchin A."/>
            <person name="Diard M."/>
            <person name="Dossat C."/>
            <person name="Karoui M.E."/>
            <person name="Frapy E."/>
            <person name="Garry L."/>
            <person name="Ghigo J.M."/>
            <person name="Gilles A.M."/>
            <person name="Johnson J."/>
            <person name="Le Bouguenec C."/>
            <person name="Lescat M."/>
            <person name="Mangenot S."/>
            <person name="Martinez-Jehanne V."/>
            <person name="Matic I."/>
            <person name="Nassif X."/>
            <person name="Oztas S."/>
            <person name="Petit M.A."/>
            <person name="Pichon C."/>
            <person name="Rouy Z."/>
            <person name="Ruf C.S."/>
            <person name="Schneider D."/>
            <person name="Tourret J."/>
            <person name="Vacherie B."/>
            <person name="Vallenet D."/>
            <person name="Medigue C."/>
            <person name="Rocha E.P.C."/>
            <person name="Denamur E."/>
        </authorList>
    </citation>
    <scope>NUCLEOTIDE SEQUENCE [LARGE SCALE GENOMIC DNA]</scope>
    <source>
        <strain>IAI39 / ExPEC</strain>
    </source>
</reference>
<protein>
    <recommendedName>
        <fullName evidence="1">Xylose isomerase</fullName>
        <ecNumber evidence="1">5.3.1.5</ecNumber>
    </recommendedName>
</protein>
<proteinExistence type="inferred from homology"/>
<sequence length="440" mass="49719">MQAYFDQLDRVRYEGSKSSNPLAFRHYNPDELVLGKRMEEHLRFAACYWHTFCWNGADMFGVGAFNRPWQQPGEALALAKRKADVAFEFFHKLHVPFYCFHDVDVSPEGASLKEYINNFAQMVDVLAGKQEESGVKLLWGTANCFTNPRYGAGAATNPDPEVFSWAATQVVTAMEATHKLGGENYVLWGGREGYETLLNTDLRQEREQLGRFMQMVVEHKHKIGFQGTLLIEPKPQEPTKHQYDYDAATVYGFLKQFGLEKEIKLNIEANHATLAGHSFHHEIATAIALGLFGSVDANRGDAQLGWDTDQFPNSVEENALVMYEILKAGGFTTGGLNFDAKVRRQSTDKYDLFYGHIGAMDTMALALKIAARMIEDGELDKRIAQRYSGWNSELGQQILKGQMSLADLAKYAQEHNLSPVHQSGRQEQLENLVNHYLFDK</sequence>
<keyword id="KW-0119">Carbohydrate metabolism</keyword>
<keyword id="KW-0963">Cytoplasm</keyword>
<keyword id="KW-0413">Isomerase</keyword>
<keyword id="KW-0460">Magnesium</keyword>
<keyword id="KW-0479">Metal-binding</keyword>
<keyword id="KW-0859">Xylose metabolism</keyword>
<organism>
    <name type="scientific">Escherichia coli O7:K1 (strain IAI39 / ExPEC)</name>
    <dbReference type="NCBI Taxonomy" id="585057"/>
    <lineage>
        <taxon>Bacteria</taxon>
        <taxon>Pseudomonadati</taxon>
        <taxon>Pseudomonadota</taxon>
        <taxon>Gammaproteobacteria</taxon>
        <taxon>Enterobacterales</taxon>
        <taxon>Enterobacteriaceae</taxon>
        <taxon>Escherichia</taxon>
    </lineage>
</organism>
<gene>
    <name evidence="1" type="primary">xylA</name>
    <name type="ordered locus">ECIAI39_4077</name>
</gene>
<name>XYLA_ECO7I</name>
<dbReference type="EC" id="5.3.1.5" evidence="1"/>
<dbReference type="EMBL" id="CU928164">
    <property type="protein sequence ID" value="CAR20185.1"/>
    <property type="molecule type" value="Genomic_DNA"/>
</dbReference>
<dbReference type="RefSeq" id="WP_001149592.1">
    <property type="nucleotide sequence ID" value="NC_011750.1"/>
</dbReference>
<dbReference type="RefSeq" id="YP_002409960.1">
    <property type="nucleotide sequence ID" value="NC_011750.1"/>
</dbReference>
<dbReference type="SMR" id="B7NP65"/>
<dbReference type="STRING" id="585057.ECIAI39_4077"/>
<dbReference type="GeneID" id="75173765"/>
<dbReference type="KEGG" id="ect:ECIAI39_4077"/>
<dbReference type="PATRIC" id="fig|585057.6.peg.4228"/>
<dbReference type="HOGENOM" id="CLU_037261_1_0_6"/>
<dbReference type="Proteomes" id="UP000000749">
    <property type="component" value="Chromosome"/>
</dbReference>
<dbReference type="GO" id="GO:0005737">
    <property type="term" value="C:cytoplasm"/>
    <property type="evidence" value="ECO:0007669"/>
    <property type="project" value="UniProtKB-SubCell"/>
</dbReference>
<dbReference type="GO" id="GO:0000287">
    <property type="term" value="F:magnesium ion binding"/>
    <property type="evidence" value="ECO:0007669"/>
    <property type="project" value="UniProtKB-UniRule"/>
</dbReference>
<dbReference type="GO" id="GO:0009045">
    <property type="term" value="F:xylose isomerase activity"/>
    <property type="evidence" value="ECO:0007669"/>
    <property type="project" value="UniProtKB-UniRule"/>
</dbReference>
<dbReference type="GO" id="GO:0042732">
    <property type="term" value="P:D-xylose metabolic process"/>
    <property type="evidence" value="ECO:0007669"/>
    <property type="project" value="UniProtKB-UniRule"/>
</dbReference>
<dbReference type="FunFam" id="3.20.20.150:FF:000002">
    <property type="entry name" value="Xylose isomerase"/>
    <property type="match status" value="1"/>
</dbReference>
<dbReference type="Gene3D" id="3.20.20.150">
    <property type="entry name" value="Divalent-metal-dependent TIM barrel enzymes"/>
    <property type="match status" value="1"/>
</dbReference>
<dbReference type="HAMAP" id="MF_00455">
    <property type="entry name" value="Xylose_isom_A"/>
    <property type="match status" value="1"/>
</dbReference>
<dbReference type="InterPro" id="IPR036237">
    <property type="entry name" value="Xyl_isomerase-like_sf"/>
</dbReference>
<dbReference type="InterPro" id="IPR013452">
    <property type="entry name" value="Xylose_isom_bac"/>
</dbReference>
<dbReference type="InterPro" id="IPR001998">
    <property type="entry name" value="Xylose_isomerase"/>
</dbReference>
<dbReference type="NCBIfam" id="NF003998">
    <property type="entry name" value="PRK05474.1"/>
    <property type="match status" value="1"/>
</dbReference>
<dbReference type="NCBIfam" id="TIGR02630">
    <property type="entry name" value="xylose_isom_A"/>
    <property type="match status" value="1"/>
</dbReference>
<dbReference type="PANTHER" id="PTHR48408">
    <property type="match status" value="1"/>
</dbReference>
<dbReference type="PANTHER" id="PTHR48408:SF1">
    <property type="entry name" value="XYLOSE ISOMERASE"/>
    <property type="match status" value="1"/>
</dbReference>
<dbReference type="PRINTS" id="PR00688">
    <property type="entry name" value="XYLOSISMRASE"/>
</dbReference>
<dbReference type="SUPFAM" id="SSF51658">
    <property type="entry name" value="Xylose isomerase-like"/>
    <property type="match status" value="1"/>
</dbReference>
<dbReference type="PROSITE" id="PS51415">
    <property type="entry name" value="XYLOSE_ISOMERASE"/>
    <property type="match status" value="1"/>
</dbReference>
<accession>B7NP65</accession>
<feature type="chain" id="PRO_1000200295" description="Xylose isomerase">
    <location>
        <begin position="1"/>
        <end position="440"/>
    </location>
</feature>
<feature type="active site" evidence="1">
    <location>
        <position position="101"/>
    </location>
</feature>
<feature type="active site" evidence="1">
    <location>
        <position position="104"/>
    </location>
</feature>
<feature type="binding site" evidence="1">
    <location>
        <position position="232"/>
    </location>
    <ligand>
        <name>Mg(2+)</name>
        <dbReference type="ChEBI" id="CHEBI:18420"/>
        <label>1</label>
    </ligand>
</feature>
<feature type="binding site" evidence="1">
    <location>
        <position position="268"/>
    </location>
    <ligand>
        <name>Mg(2+)</name>
        <dbReference type="ChEBI" id="CHEBI:18420"/>
        <label>1</label>
    </ligand>
</feature>
<feature type="binding site" evidence="1">
    <location>
        <position position="268"/>
    </location>
    <ligand>
        <name>Mg(2+)</name>
        <dbReference type="ChEBI" id="CHEBI:18420"/>
        <label>2</label>
    </ligand>
</feature>
<feature type="binding site" evidence="1">
    <location>
        <position position="271"/>
    </location>
    <ligand>
        <name>Mg(2+)</name>
        <dbReference type="ChEBI" id="CHEBI:18420"/>
        <label>2</label>
    </ligand>
</feature>
<feature type="binding site" evidence="1">
    <location>
        <position position="296"/>
    </location>
    <ligand>
        <name>Mg(2+)</name>
        <dbReference type="ChEBI" id="CHEBI:18420"/>
        <label>1</label>
    </ligand>
</feature>
<feature type="binding site" evidence="1">
    <location>
        <position position="307"/>
    </location>
    <ligand>
        <name>Mg(2+)</name>
        <dbReference type="ChEBI" id="CHEBI:18420"/>
        <label>2</label>
    </ligand>
</feature>
<feature type="binding site" evidence="1">
    <location>
        <position position="309"/>
    </location>
    <ligand>
        <name>Mg(2+)</name>
        <dbReference type="ChEBI" id="CHEBI:18420"/>
        <label>2</label>
    </ligand>
</feature>
<feature type="binding site" evidence="1">
    <location>
        <position position="339"/>
    </location>
    <ligand>
        <name>Mg(2+)</name>
        <dbReference type="ChEBI" id="CHEBI:18420"/>
        <label>1</label>
    </ligand>
</feature>